<protein>
    <recommendedName>
        <fullName evidence="1">Cell division protein FtsB</fullName>
    </recommendedName>
</protein>
<keyword id="KW-0131">Cell cycle</keyword>
<keyword id="KW-0132">Cell division</keyword>
<keyword id="KW-0997">Cell inner membrane</keyword>
<keyword id="KW-1003">Cell membrane</keyword>
<keyword id="KW-0175">Coiled coil</keyword>
<keyword id="KW-0472">Membrane</keyword>
<keyword id="KW-0812">Transmembrane</keyword>
<keyword id="KW-1133">Transmembrane helix</keyword>
<reference key="1">
    <citation type="journal article" date="2007" name="PLoS Genet.">
        <title>Meningococcal genetic variation mechanisms viewed through comparative analysis of serogroup C strain FAM18.</title>
        <authorList>
            <person name="Bentley S.D."/>
            <person name="Vernikos G.S."/>
            <person name="Snyder L.A.S."/>
            <person name="Churcher C."/>
            <person name="Arrowsmith C."/>
            <person name="Chillingworth T."/>
            <person name="Cronin A."/>
            <person name="Davis P.H."/>
            <person name="Holroyd N.E."/>
            <person name="Jagels K."/>
            <person name="Maddison M."/>
            <person name="Moule S."/>
            <person name="Rabbinowitsch E."/>
            <person name="Sharp S."/>
            <person name="Unwin L."/>
            <person name="Whitehead S."/>
            <person name="Quail M.A."/>
            <person name="Achtman M."/>
            <person name="Barrell B.G."/>
            <person name="Saunders N.J."/>
            <person name="Parkhill J."/>
        </authorList>
    </citation>
    <scope>NUCLEOTIDE SEQUENCE [LARGE SCALE GENOMIC DNA]</scope>
    <source>
        <strain>ATCC 700532 / DSM 15464 / FAM18</strain>
    </source>
</reference>
<sequence>MKWVTVVLSFALVCCQYSLWFGKGSIGRNSSLREQIAVQEEKNQTLALRNHSLAAEVYDLENGQEAISEIARVELGYIQDGETFYRLIRHNR</sequence>
<evidence type="ECO:0000255" key="1">
    <source>
        <dbReference type="HAMAP-Rule" id="MF_00599"/>
    </source>
</evidence>
<organism>
    <name type="scientific">Neisseria meningitidis serogroup C / serotype 2a (strain ATCC 700532 / DSM 15464 / FAM18)</name>
    <dbReference type="NCBI Taxonomy" id="272831"/>
    <lineage>
        <taxon>Bacteria</taxon>
        <taxon>Pseudomonadati</taxon>
        <taxon>Pseudomonadota</taxon>
        <taxon>Betaproteobacteria</taxon>
        <taxon>Neisseriales</taxon>
        <taxon>Neisseriaceae</taxon>
        <taxon>Neisseria</taxon>
    </lineage>
</organism>
<gene>
    <name evidence="1" type="primary">ftsB</name>
    <name type="ordered locus">NMC1221</name>
</gene>
<proteinExistence type="inferred from homology"/>
<name>FTSB_NEIMF</name>
<feature type="chain" id="PRO_1000025710" description="Cell division protein FtsB">
    <location>
        <begin position="1"/>
        <end position="92"/>
    </location>
</feature>
<feature type="topological domain" description="Cytoplasmic" evidence="1">
    <location>
        <begin position="1"/>
        <end position="3"/>
    </location>
</feature>
<feature type="transmembrane region" description="Helical" evidence="1">
    <location>
        <begin position="4"/>
        <end position="21"/>
    </location>
</feature>
<feature type="topological domain" description="Periplasmic" evidence="1">
    <location>
        <begin position="22"/>
        <end position="92"/>
    </location>
</feature>
<feature type="coiled-coil region" evidence="1">
    <location>
        <begin position="28"/>
        <end position="50"/>
    </location>
</feature>
<dbReference type="EMBL" id="AM421808">
    <property type="protein sequence ID" value="CAM10459.1"/>
    <property type="molecule type" value="Genomic_DNA"/>
</dbReference>
<dbReference type="RefSeq" id="WP_002213385.1">
    <property type="nucleotide sequence ID" value="NC_008767.1"/>
</dbReference>
<dbReference type="SMR" id="A1KUB7"/>
<dbReference type="GeneID" id="93385912"/>
<dbReference type="KEGG" id="nmc:NMC1221"/>
<dbReference type="HOGENOM" id="CLU_134863_5_2_4"/>
<dbReference type="Proteomes" id="UP000002286">
    <property type="component" value="Chromosome"/>
</dbReference>
<dbReference type="GO" id="GO:0032153">
    <property type="term" value="C:cell division site"/>
    <property type="evidence" value="ECO:0007669"/>
    <property type="project" value="UniProtKB-UniRule"/>
</dbReference>
<dbReference type="GO" id="GO:0030428">
    <property type="term" value="C:cell septum"/>
    <property type="evidence" value="ECO:0007669"/>
    <property type="project" value="TreeGrafter"/>
</dbReference>
<dbReference type="GO" id="GO:0005886">
    <property type="term" value="C:plasma membrane"/>
    <property type="evidence" value="ECO:0007669"/>
    <property type="project" value="UniProtKB-SubCell"/>
</dbReference>
<dbReference type="GO" id="GO:0043093">
    <property type="term" value="P:FtsZ-dependent cytokinesis"/>
    <property type="evidence" value="ECO:0007669"/>
    <property type="project" value="UniProtKB-UniRule"/>
</dbReference>
<dbReference type="HAMAP" id="MF_00599">
    <property type="entry name" value="FtsB"/>
    <property type="match status" value="1"/>
</dbReference>
<dbReference type="InterPro" id="IPR023081">
    <property type="entry name" value="Cell_div_FtsB"/>
</dbReference>
<dbReference type="InterPro" id="IPR007060">
    <property type="entry name" value="FtsL/DivIC"/>
</dbReference>
<dbReference type="NCBIfam" id="NF002058">
    <property type="entry name" value="PRK00888.1"/>
    <property type="match status" value="1"/>
</dbReference>
<dbReference type="PANTHER" id="PTHR37485">
    <property type="entry name" value="CELL DIVISION PROTEIN FTSB"/>
    <property type="match status" value="1"/>
</dbReference>
<dbReference type="PANTHER" id="PTHR37485:SF1">
    <property type="entry name" value="CELL DIVISION PROTEIN FTSB"/>
    <property type="match status" value="1"/>
</dbReference>
<dbReference type="Pfam" id="PF04977">
    <property type="entry name" value="DivIC"/>
    <property type="match status" value="1"/>
</dbReference>
<accession>A1KUB7</accession>
<comment type="function">
    <text evidence="1">Essential cell division protein. May link together the upstream cell division proteins, which are predominantly cytoplasmic, with the downstream cell division proteins, which are predominantly periplasmic.</text>
</comment>
<comment type="subunit">
    <text evidence="1">Part of a complex composed of FtsB, FtsL and FtsQ.</text>
</comment>
<comment type="subcellular location">
    <subcellularLocation>
        <location evidence="1">Cell inner membrane</location>
        <topology evidence="1">Single-pass type II membrane protein</topology>
    </subcellularLocation>
    <text evidence="1">Localizes to the division septum.</text>
</comment>
<comment type="similarity">
    <text evidence="1">Belongs to the FtsB family.</text>
</comment>